<evidence type="ECO:0000255" key="1">
    <source>
        <dbReference type="HAMAP-Rule" id="MF_00111"/>
    </source>
</evidence>
<organism>
    <name type="scientific">Clostridium tetani (strain Massachusetts / E88)</name>
    <dbReference type="NCBI Taxonomy" id="212717"/>
    <lineage>
        <taxon>Bacteria</taxon>
        <taxon>Bacillati</taxon>
        <taxon>Bacillota</taxon>
        <taxon>Clostridia</taxon>
        <taxon>Eubacteriales</taxon>
        <taxon>Clostridiaceae</taxon>
        <taxon>Clostridium</taxon>
    </lineage>
</organism>
<dbReference type="EC" id="2.5.1.7" evidence="1"/>
<dbReference type="EMBL" id="AE015927">
    <property type="protein sequence ID" value="AAO34956.1"/>
    <property type="molecule type" value="Genomic_DNA"/>
</dbReference>
<dbReference type="RefSeq" id="WP_011098627.1">
    <property type="nucleotide sequence ID" value="NC_004557.1"/>
</dbReference>
<dbReference type="SMR" id="Q898X3"/>
<dbReference type="STRING" id="212717.CTC_00314"/>
<dbReference type="GeneID" id="24252523"/>
<dbReference type="KEGG" id="ctc:CTC_00314"/>
<dbReference type="HOGENOM" id="CLU_027387_0_0_9"/>
<dbReference type="OrthoDB" id="9803760at2"/>
<dbReference type="UniPathway" id="UPA00219"/>
<dbReference type="Proteomes" id="UP000001412">
    <property type="component" value="Chromosome"/>
</dbReference>
<dbReference type="GO" id="GO:0005737">
    <property type="term" value="C:cytoplasm"/>
    <property type="evidence" value="ECO:0007669"/>
    <property type="project" value="UniProtKB-SubCell"/>
</dbReference>
<dbReference type="GO" id="GO:0008760">
    <property type="term" value="F:UDP-N-acetylglucosamine 1-carboxyvinyltransferase activity"/>
    <property type="evidence" value="ECO:0007669"/>
    <property type="project" value="UniProtKB-UniRule"/>
</dbReference>
<dbReference type="GO" id="GO:0051301">
    <property type="term" value="P:cell division"/>
    <property type="evidence" value="ECO:0007669"/>
    <property type="project" value="UniProtKB-KW"/>
</dbReference>
<dbReference type="GO" id="GO:0071555">
    <property type="term" value="P:cell wall organization"/>
    <property type="evidence" value="ECO:0007669"/>
    <property type="project" value="UniProtKB-KW"/>
</dbReference>
<dbReference type="GO" id="GO:0009252">
    <property type="term" value="P:peptidoglycan biosynthetic process"/>
    <property type="evidence" value="ECO:0007669"/>
    <property type="project" value="UniProtKB-UniRule"/>
</dbReference>
<dbReference type="GO" id="GO:0008360">
    <property type="term" value="P:regulation of cell shape"/>
    <property type="evidence" value="ECO:0007669"/>
    <property type="project" value="UniProtKB-KW"/>
</dbReference>
<dbReference type="GO" id="GO:0019277">
    <property type="term" value="P:UDP-N-acetylgalactosamine biosynthetic process"/>
    <property type="evidence" value="ECO:0007669"/>
    <property type="project" value="InterPro"/>
</dbReference>
<dbReference type="CDD" id="cd01555">
    <property type="entry name" value="UdpNAET"/>
    <property type="match status" value="1"/>
</dbReference>
<dbReference type="FunFam" id="3.65.10.10:FF:000001">
    <property type="entry name" value="UDP-N-acetylglucosamine 1-carboxyvinyltransferase"/>
    <property type="match status" value="1"/>
</dbReference>
<dbReference type="Gene3D" id="3.65.10.10">
    <property type="entry name" value="Enolpyruvate transferase domain"/>
    <property type="match status" value="2"/>
</dbReference>
<dbReference type="HAMAP" id="MF_00111">
    <property type="entry name" value="MurA"/>
    <property type="match status" value="1"/>
</dbReference>
<dbReference type="InterPro" id="IPR001986">
    <property type="entry name" value="Enolpyruvate_Tfrase_dom"/>
</dbReference>
<dbReference type="InterPro" id="IPR036968">
    <property type="entry name" value="Enolpyruvate_Tfrase_sf"/>
</dbReference>
<dbReference type="InterPro" id="IPR050068">
    <property type="entry name" value="MurA_subfamily"/>
</dbReference>
<dbReference type="InterPro" id="IPR013792">
    <property type="entry name" value="RNA3'P_cycl/enolpyr_Trfase_a/b"/>
</dbReference>
<dbReference type="InterPro" id="IPR005750">
    <property type="entry name" value="UDP_GlcNAc_COvinyl_MurA"/>
</dbReference>
<dbReference type="NCBIfam" id="TIGR01072">
    <property type="entry name" value="murA"/>
    <property type="match status" value="1"/>
</dbReference>
<dbReference type="NCBIfam" id="NF006873">
    <property type="entry name" value="PRK09369.1"/>
    <property type="match status" value="1"/>
</dbReference>
<dbReference type="PANTHER" id="PTHR43783">
    <property type="entry name" value="UDP-N-ACETYLGLUCOSAMINE 1-CARBOXYVINYLTRANSFERASE"/>
    <property type="match status" value="1"/>
</dbReference>
<dbReference type="PANTHER" id="PTHR43783:SF1">
    <property type="entry name" value="UDP-N-ACETYLGLUCOSAMINE 1-CARBOXYVINYLTRANSFERASE"/>
    <property type="match status" value="1"/>
</dbReference>
<dbReference type="Pfam" id="PF00275">
    <property type="entry name" value="EPSP_synthase"/>
    <property type="match status" value="1"/>
</dbReference>
<dbReference type="SUPFAM" id="SSF55205">
    <property type="entry name" value="EPT/RTPC-like"/>
    <property type="match status" value="1"/>
</dbReference>
<comment type="function">
    <text evidence="1">Cell wall formation. Adds enolpyruvyl to UDP-N-acetylglucosamine.</text>
</comment>
<comment type="catalytic activity">
    <reaction evidence="1">
        <text>phosphoenolpyruvate + UDP-N-acetyl-alpha-D-glucosamine = UDP-N-acetyl-3-O-(1-carboxyvinyl)-alpha-D-glucosamine + phosphate</text>
        <dbReference type="Rhea" id="RHEA:18681"/>
        <dbReference type="ChEBI" id="CHEBI:43474"/>
        <dbReference type="ChEBI" id="CHEBI:57705"/>
        <dbReference type="ChEBI" id="CHEBI:58702"/>
        <dbReference type="ChEBI" id="CHEBI:68483"/>
        <dbReference type="EC" id="2.5.1.7"/>
    </reaction>
</comment>
<comment type="pathway">
    <text evidence="1">Cell wall biogenesis; peptidoglycan biosynthesis.</text>
</comment>
<comment type="subcellular location">
    <subcellularLocation>
        <location evidence="1">Cytoplasm</location>
    </subcellularLocation>
</comment>
<comment type="similarity">
    <text evidence="1">Belongs to the EPSP synthase family. MurA subfamily.</text>
</comment>
<reference key="1">
    <citation type="journal article" date="2003" name="Proc. Natl. Acad. Sci. U.S.A.">
        <title>The genome sequence of Clostridium tetani, the causative agent of tetanus disease.</title>
        <authorList>
            <person name="Brueggemann H."/>
            <person name="Baeumer S."/>
            <person name="Fricke W.F."/>
            <person name="Wiezer A."/>
            <person name="Liesegang H."/>
            <person name="Decker I."/>
            <person name="Herzberg C."/>
            <person name="Martinez-Arias R."/>
            <person name="Merkl R."/>
            <person name="Henne A."/>
            <person name="Gottschalk G."/>
        </authorList>
    </citation>
    <scope>NUCLEOTIDE SEQUENCE [LARGE SCALE GENOMIC DNA]</scope>
    <source>
        <strain>Massachusetts / E88</strain>
    </source>
</reference>
<keyword id="KW-0131">Cell cycle</keyword>
<keyword id="KW-0132">Cell division</keyword>
<keyword id="KW-0133">Cell shape</keyword>
<keyword id="KW-0961">Cell wall biogenesis/degradation</keyword>
<keyword id="KW-0963">Cytoplasm</keyword>
<keyword id="KW-0573">Peptidoglycan synthesis</keyword>
<keyword id="KW-0670">Pyruvate</keyword>
<keyword id="KW-1185">Reference proteome</keyword>
<keyword id="KW-0808">Transferase</keyword>
<feature type="chain" id="PRO_0000231191" description="UDP-N-acetylglucosamine 1-carboxyvinyltransferase 2">
    <location>
        <begin position="1"/>
        <end position="417"/>
    </location>
</feature>
<feature type="active site" description="Proton donor" evidence="1">
    <location>
        <position position="118"/>
    </location>
</feature>
<feature type="binding site" evidence="1">
    <location>
        <begin position="22"/>
        <end position="23"/>
    </location>
    <ligand>
        <name>phosphoenolpyruvate</name>
        <dbReference type="ChEBI" id="CHEBI:58702"/>
    </ligand>
</feature>
<feature type="binding site" evidence="1">
    <location>
        <position position="94"/>
    </location>
    <ligand>
        <name>UDP-N-acetyl-alpha-D-glucosamine</name>
        <dbReference type="ChEBI" id="CHEBI:57705"/>
    </ligand>
</feature>
<feature type="binding site" evidence="1">
    <location>
        <begin position="123"/>
        <end position="127"/>
    </location>
    <ligand>
        <name>UDP-N-acetyl-alpha-D-glucosamine</name>
        <dbReference type="ChEBI" id="CHEBI:57705"/>
    </ligand>
</feature>
<feature type="binding site" evidence="1">
    <location>
        <position position="306"/>
    </location>
    <ligand>
        <name>UDP-N-acetyl-alpha-D-glucosamine</name>
        <dbReference type="ChEBI" id="CHEBI:57705"/>
    </ligand>
</feature>
<feature type="binding site" evidence="1">
    <location>
        <position position="328"/>
    </location>
    <ligand>
        <name>UDP-N-acetyl-alpha-D-glucosamine</name>
        <dbReference type="ChEBI" id="CHEBI:57705"/>
    </ligand>
</feature>
<feature type="modified residue" description="2-(S-cysteinyl)pyruvic acid O-phosphothioketal" evidence="1">
    <location>
        <position position="118"/>
    </location>
</feature>
<accession>Q898X3</accession>
<gene>
    <name evidence="1" type="primary">murA2</name>
    <name type="ordered locus">CTC_00314</name>
</gene>
<proteinExistence type="inferred from homology"/>
<sequence>MNKIIVNGGKSLKGEVNINSAKNSVLPIIAASILSGDKCIIENAPMLEDVFVISEVLKSISSEVDIDRDNNKIIIDTSNICNSEPCSELVKKLRASFLIMGPMISRFGNFKISLPGGCNIGTRPIDLHLKGLNALGADINIGYGYVEAKADKLKGNKIYLDFPSVGATENLMMAAVLAEGDTIIQNAAEEPEIEDLAKFLNSMGANIVGAGTDTINIIGVKDLKGVVHKPIYDRIEAGTFMTAAAITRSKIKLNGVNEGHLRPIIAKLTEIGVKIDTNGDSMIVDGNHQLKPVDIKTMPYPGFPTDMQAQTMALLTSIEGTSIVTETIFENRFMHATEMKRMGSNIKIDGRSAVIEGGNELTGCEVKATDLRAGAALILCGLVARGSTNVTDVYHIDRGYANIEKKLQALGAEIYRI</sequence>
<protein>
    <recommendedName>
        <fullName evidence="1">UDP-N-acetylglucosamine 1-carboxyvinyltransferase 2</fullName>
        <ecNumber evidence="1">2.5.1.7</ecNumber>
    </recommendedName>
    <alternativeName>
        <fullName evidence="1">Enoylpyruvate transferase 2</fullName>
    </alternativeName>
    <alternativeName>
        <fullName evidence="1">UDP-N-acetylglucosamine enolpyruvyl transferase 2</fullName>
        <shortName evidence="1">EPT 2</shortName>
    </alternativeName>
</protein>
<name>MURA2_CLOTE</name>